<protein>
    <recommendedName>
        <fullName evidence="1">External core antigen</fullName>
    </recommendedName>
    <alternativeName>
        <fullName evidence="1">HBeAg</fullName>
    </alternativeName>
    <alternativeName>
        <fullName evidence="1">Precore protein</fullName>
    </alternativeName>
    <alternativeName>
        <fullName evidence="1">p25</fullName>
    </alternativeName>
</protein>
<feature type="signal peptide" evidence="1">
    <location>
        <begin position="1"/>
        <end position="19"/>
    </location>
</feature>
<feature type="chain" id="PRO_0000324724" description="External core antigen" evidence="1">
    <location>
        <begin position="20"/>
        <end position="212"/>
    </location>
</feature>
<feature type="propeptide" id="PRO_0000324725">
    <location>
        <begin position="184"/>
        <end position="212"/>
    </location>
</feature>
<feature type="repeat" description="1; half-length">
    <location>
        <begin position="184"/>
        <end position="190"/>
    </location>
</feature>
<feature type="repeat" description="2">
    <location>
        <begin position="191"/>
        <end position="198"/>
    </location>
</feature>
<feature type="repeat" description="3">
    <location>
        <begin position="199"/>
        <end position="206"/>
    </location>
</feature>
<feature type="region of interest" description="HBEAG" evidence="1">
    <location>
        <begin position="25"/>
        <end position="27"/>
    </location>
</feature>
<feature type="region of interest" description="Disordered" evidence="2">
    <location>
        <begin position="165"/>
        <end position="212"/>
    </location>
</feature>
<feature type="region of interest" description="3 X 8 AA repeats of S-P-R-R-R-R-S-Q">
    <location>
        <begin position="184"/>
        <end position="206"/>
    </location>
</feature>
<feature type="compositionally biased region" description="Basic residues" evidence="2">
    <location>
        <begin position="178"/>
        <end position="205"/>
    </location>
</feature>
<feature type="site" description="Cleavage; by host" evidence="1">
    <location>
        <begin position="183"/>
        <end position="184"/>
    </location>
</feature>
<feature type="disulfide bond" description="Interchain" evidence="1">
    <location>
        <position position="77"/>
    </location>
</feature>
<feature type="disulfide bond" description="Interchain" evidence="1">
    <location>
        <position position="90"/>
    </location>
</feature>
<feature type="mutagenesis site" description="Complete loss of cleavage." evidence="3">
    <original>R</original>
    <variation>G</variation>
    <location>
        <position position="180"/>
    </location>
</feature>
<feature type="mutagenesis site" description="Complete loss of cleavage." evidence="3">
    <original>R</original>
    <variation>G</variation>
    <location>
        <position position="183"/>
    </location>
</feature>
<feature type="mutagenesis site" description="No effect on cleavage." evidence="3">
    <original>R</original>
    <variation>G</variation>
    <location>
        <position position="186"/>
    </location>
</feature>
<feature type="mutagenesis site" description="No effect on cleavage." evidence="3">
    <original>R</original>
    <variation>G</variation>
    <location>
        <position position="188"/>
    </location>
</feature>
<feature type="mutagenesis site" description="No effect on cleavage." evidence="3">
    <original>R</original>
    <variation>G</variation>
    <location>
        <position position="193"/>
    </location>
</feature>
<feature type="mutagenesis site" description="No effect on cleavage." evidence="3">
    <original>R</original>
    <variation>G</variation>
    <location>
        <position position="196"/>
    </location>
</feature>
<feature type="mutagenesis site" description="No effect on cleavage." evidence="3">
    <original>R</original>
    <variation>G</variation>
    <location>
        <position position="201"/>
    </location>
</feature>
<feature type="mutagenesis site" description="No effect on cleavage." evidence="3">
    <original>R</original>
    <variation>G</variation>
    <location>
        <position position="204"/>
    </location>
</feature>
<sequence length="212" mass="24350">MQLFHLCLIISCSCPTVQASKLCLGWLWGMDIDPYKEFGATVELLSFLPSDFFPSVRDLLDTASALYREALESPEHCSPHHTALRQAILCWGELMTLATWVGVNLEDPASRDLVVSYVNTNMGLKFRQLLWFHISCLTFGRETVIEYLVSFGVWIRTPPAYRPPNAPILSTLPETTVVRRRGRSPRRRTPSPRRRRSQSPRRRRSQSRESQC</sequence>
<organismHost>
    <name type="scientific">Homo sapiens</name>
    <name type="common">Human</name>
    <dbReference type="NCBI Taxonomy" id="9606"/>
</organismHost>
<organismHost>
    <name type="scientific">Pan troglodytes</name>
    <name type="common">Chimpanzee</name>
    <dbReference type="NCBI Taxonomy" id="9598"/>
</organismHost>
<organism>
    <name type="scientific">Hepatitis B virus genotype D subtype ayw (isolate France/Tiollais/1979)</name>
    <name type="common">HBV-D</name>
    <dbReference type="NCBI Taxonomy" id="490133"/>
    <lineage>
        <taxon>Viruses</taxon>
        <taxon>Riboviria</taxon>
        <taxon>Pararnavirae</taxon>
        <taxon>Artverviricota</taxon>
        <taxon>Revtraviricetes</taxon>
        <taxon>Blubervirales</taxon>
        <taxon>Hepadnaviridae</taxon>
        <taxon>Orthohepadnavirus</taxon>
        <taxon>Hepatitis B virus</taxon>
        <taxon>hepatitis B virus genotype D</taxon>
    </lineage>
</organism>
<keyword id="KW-0002">3D-structure</keyword>
<keyword id="KW-0024">Alternative initiation</keyword>
<keyword id="KW-1015">Disulfide bond</keyword>
<keyword id="KW-1048">Host nucleus</keyword>
<keyword id="KW-0945">Host-virus interaction</keyword>
<keyword id="KW-1185">Reference proteome</keyword>
<keyword id="KW-0677">Repeat</keyword>
<keyword id="KW-0964">Secreted</keyword>
<keyword id="KW-0732">Signal</keyword>
<keyword id="KW-0899">Viral immunoevasion</keyword>
<evidence type="ECO:0000255" key="1">
    <source>
        <dbReference type="HAMAP-Rule" id="MF_04076"/>
    </source>
</evidence>
<evidence type="ECO:0000256" key="2">
    <source>
        <dbReference type="SAM" id="MobiDB-lite"/>
    </source>
</evidence>
<evidence type="ECO:0000269" key="3">
    <source>
    </source>
</evidence>
<comment type="function">
    <text evidence="1">May regulate immune response to the intracellular capsid in acting as a T-cell tolerogen, by having an immunoregulatory effect which prevents destruction of infected cells by cytotoxic T-cells. This immune regulation may predispose to chronicity during perinatal infections and prevent severe liver injury during adult infections.</text>
</comment>
<comment type="subunit">
    <text evidence="1">Homodimerizes.</text>
</comment>
<comment type="subcellular location">
    <subcellularLocation>
        <location evidence="1">Secreted</location>
    </subcellularLocation>
    <subcellularLocation>
        <location evidence="1">Host nucleus</location>
    </subcellularLocation>
</comment>
<comment type="alternative products">
    <event type="alternative initiation"/>
    <isoform>
        <id>P0C573-1</id>
        <name>External core antigen</name>
        <sequence type="displayed"/>
    </isoform>
    <isoform>
        <id>P03146-1</id>
        <name>Capsid protein</name>
        <sequence type="external"/>
    </isoform>
</comment>
<comment type="PTM">
    <text evidence="1">Phosphorylated.</text>
</comment>
<comment type="PTM">
    <text evidence="1">Cleaved by host furin.</text>
</comment>
<comment type="similarity">
    <text evidence="1">Belongs to the orthohepadnavirus precore antigen family.</text>
</comment>
<gene>
    <name evidence="1" type="primary">C</name>
</gene>
<name>HBEAG_HBVD3</name>
<dbReference type="EMBL" id="V01460">
    <property type="status" value="NOT_ANNOTATED_CDS"/>
    <property type="molecule type" value="Genomic_DNA"/>
</dbReference>
<dbReference type="EMBL" id="X02496">
    <property type="status" value="NOT_ANNOTATED_CDS"/>
    <property type="molecule type" value="Genomic_DNA"/>
</dbReference>
<dbReference type="PDB" id="8PX3">
    <property type="method" value="EM"/>
    <property type="resolution" value="3.00 A"/>
    <property type="chains" value="A/B/C/D=30-212"/>
</dbReference>
<dbReference type="PDB" id="8PX6">
    <property type="method" value="EM"/>
    <property type="resolution" value="2.50 A"/>
    <property type="chains" value="A/B/C/D=30-212"/>
</dbReference>
<dbReference type="PDBsum" id="8PX3"/>
<dbReference type="PDBsum" id="8PX6"/>
<dbReference type="EMDB" id="EMD-15995"/>
<dbReference type="EMDB" id="EMD-16009"/>
<dbReference type="SMR" id="P0C573"/>
<dbReference type="ABCD" id="P0C573">
    <property type="antibodies" value="2 sequenced antibodies"/>
</dbReference>
<dbReference type="Proteomes" id="UP000007930">
    <property type="component" value="Segment"/>
</dbReference>
<dbReference type="GO" id="GO:0005576">
    <property type="term" value="C:extracellular region"/>
    <property type="evidence" value="ECO:0007669"/>
    <property type="project" value="UniProtKB-SubCell"/>
</dbReference>
<dbReference type="GO" id="GO:0043657">
    <property type="term" value="C:host cell"/>
    <property type="evidence" value="ECO:0007669"/>
    <property type="project" value="GOC"/>
</dbReference>
<dbReference type="GO" id="GO:0030430">
    <property type="term" value="C:host cell cytoplasm"/>
    <property type="evidence" value="ECO:0007669"/>
    <property type="project" value="UniProtKB-UniRule"/>
</dbReference>
<dbReference type="GO" id="GO:0042025">
    <property type="term" value="C:host cell nucleus"/>
    <property type="evidence" value="ECO:0007669"/>
    <property type="project" value="UniProtKB-SubCell"/>
</dbReference>
<dbReference type="GO" id="GO:0039619">
    <property type="term" value="C:T=4 icosahedral viral capsid"/>
    <property type="evidence" value="ECO:0007669"/>
    <property type="project" value="UniProtKB-UniRule"/>
</dbReference>
<dbReference type="GO" id="GO:0003677">
    <property type="term" value="F:DNA binding"/>
    <property type="evidence" value="ECO:0007669"/>
    <property type="project" value="UniProtKB-UniRule"/>
</dbReference>
<dbReference type="GO" id="GO:0003723">
    <property type="term" value="F:RNA binding"/>
    <property type="evidence" value="ECO:0007669"/>
    <property type="project" value="UniProtKB-UniRule"/>
</dbReference>
<dbReference type="GO" id="GO:0005198">
    <property type="term" value="F:structural molecule activity"/>
    <property type="evidence" value="ECO:0007669"/>
    <property type="project" value="UniProtKB-UniRule"/>
</dbReference>
<dbReference type="GO" id="GO:0075521">
    <property type="term" value="P:microtubule-dependent intracellular transport of viral material towards nucleus"/>
    <property type="evidence" value="ECO:0007669"/>
    <property type="project" value="UniProtKB-UniRule"/>
</dbReference>
<dbReference type="GO" id="GO:0046718">
    <property type="term" value="P:symbiont entry into host cell"/>
    <property type="evidence" value="ECO:0007669"/>
    <property type="project" value="UniProtKB-UniRule"/>
</dbReference>
<dbReference type="GO" id="GO:0075732">
    <property type="term" value="P:viral penetration into host nucleus"/>
    <property type="evidence" value="ECO:0007669"/>
    <property type="project" value="UniProtKB-UniRule"/>
</dbReference>
<dbReference type="FunFam" id="1.10.4090.10:FF:000001">
    <property type="entry name" value="Capsid protein"/>
    <property type="match status" value="1"/>
</dbReference>
<dbReference type="Gene3D" id="1.10.4090.10">
    <property type="entry name" value="Viral capsid, core domain supefamily, Hepatitis B virus"/>
    <property type="match status" value="1"/>
</dbReference>
<dbReference type="HAMAP" id="MF_04076">
    <property type="entry name" value="HBV_HBEAG"/>
    <property type="match status" value="1"/>
</dbReference>
<dbReference type="InterPro" id="IPR013195">
    <property type="entry name" value="Hepatitis_B_virus_capsid_N"/>
</dbReference>
<dbReference type="InterPro" id="IPR002006">
    <property type="entry name" value="Hepatitis_core"/>
</dbReference>
<dbReference type="InterPro" id="IPR036459">
    <property type="entry name" value="Viral_capsid_core_dom_sf_HBV"/>
</dbReference>
<dbReference type="Pfam" id="PF08290">
    <property type="entry name" value="Hep_core_N"/>
    <property type="match status" value="1"/>
</dbReference>
<dbReference type="Pfam" id="PF00906">
    <property type="entry name" value="Hepatitis_core"/>
    <property type="match status" value="3"/>
</dbReference>
<dbReference type="SUPFAM" id="SSF47852">
    <property type="entry name" value="Hepatitis B viral capsid (hbcag)"/>
    <property type="match status" value="1"/>
</dbReference>
<accession>P0C573</accession>
<proteinExistence type="evidence at protein level"/>
<reference key="1">
    <citation type="journal article" date="1979" name="Nature">
        <title>Nucleotide sequence of the hepatitis B virus genome (subtype ayw) cloned in E. coli.</title>
        <authorList>
            <person name="Galibert F."/>
            <person name="Mandart E."/>
            <person name="Fitoussi F."/>
            <person name="Tiollais P."/>
            <person name="Charnay P."/>
        </authorList>
    </citation>
    <scope>NUCLEOTIDE SEQUENCE [GENOMIC DNA]</scope>
</reference>
<reference key="2">
    <citation type="journal article" date="1985" name="FEBS Lett.">
        <title>Subtype ayw variant of hepatitis B virus. DNA primary structure analysis.</title>
        <authorList>
            <person name="Bichko V."/>
            <person name="Pushko P."/>
            <person name="Dreilina D."/>
            <person name="Pumpen P."/>
            <person name="Gren E.Y."/>
        </authorList>
    </citation>
    <scope>NUCLEOTIDE SEQUENCE [GENOMIC DNA]</scope>
    <source>
        <strain>Latvia</strain>
    </source>
</reference>
<reference key="3">
    <citation type="journal article" date="2007" name="J. Virol.">
        <title>A structural model for duck hepatitis B virus core protein derived by extensive mutagenesis.</title>
        <authorList>
            <person name="Nassal M."/>
            <person name="Leifer I."/>
            <person name="Wingert I."/>
            <person name="Dallmeier K."/>
            <person name="Prinz S."/>
            <person name="Vorreiter J."/>
        </authorList>
    </citation>
    <scope>CLEAVAGE BY HOST FURIN</scope>
    <scope>MUTAGENESIS OF ARG-180; ARG-183; ARG-186; ARG-188; ARG-193; ARG-196; ARG-201 AND ARG-204</scope>
</reference>